<accession>Q7NWC4</accession>
<proteinExistence type="inferred from homology"/>
<keyword id="KW-0963">Cytoplasm</keyword>
<keyword id="KW-0255">Endonuclease</keyword>
<keyword id="KW-0378">Hydrolase</keyword>
<keyword id="KW-0460">Magnesium</keyword>
<keyword id="KW-0479">Metal-binding</keyword>
<keyword id="KW-0507">mRNA processing</keyword>
<keyword id="KW-0540">Nuclease</keyword>
<keyword id="KW-1185">Reference proteome</keyword>
<keyword id="KW-0694">RNA-binding</keyword>
<keyword id="KW-0698">rRNA processing</keyword>
<keyword id="KW-0699">rRNA-binding</keyword>
<keyword id="KW-0819">tRNA processing</keyword>
<organism>
    <name type="scientific">Chromobacterium violaceum (strain ATCC 12472 / DSM 30191 / JCM 1249 / CCUG 213 / NBRC 12614 / NCIMB 9131 / NCTC 9757 / MK)</name>
    <dbReference type="NCBI Taxonomy" id="243365"/>
    <lineage>
        <taxon>Bacteria</taxon>
        <taxon>Pseudomonadati</taxon>
        <taxon>Pseudomonadota</taxon>
        <taxon>Betaproteobacteria</taxon>
        <taxon>Neisseriales</taxon>
        <taxon>Chromobacteriaceae</taxon>
        <taxon>Chromobacterium</taxon>
    </lineage>
</organism>
<evidence type="ECO:0000255" key="1">
    <source>
        <dbReference type="HAMAP-Rule" id="MF_00104"/>
    </source>
</evidence>
<feature type="chain" id="PRO_0000228516" description="Ribonuclease 3">
    <location>
        <begin position="1"/>
        <end position="236"/>
    </location>
</feature>
<feature type="domain" description="RNase III" evidence="1">
    <location>
        <begin position="8"/>
        <end position="130"/>
    </location>
</feature>
<feature type="domain" description="DRBM" evidence="1">
    <location>
        <begin position="157"/>
        <end position="227"/>
    </location>
</feature>
<feature type="active site" evidence="1">
    <location>
        <position position="47"/>
    </location>
</feature>
<feature type="active site" evidence="1">
    <location>
        <position position="119"/>
    </location>
</feature>
<feature type="binding site" evidence="1">
    <location>
        <position position="43"/>
    </location>
    <ligand>
        <name>Mg(2+)</name>
        <dbReference type="ChEBI" id="CHEBI:18420"/>
    </ligand>
</feature>
<feature type="binding site" evidence="1">
    <location>
        <position position="116"/>
    </location>
    <ligand>
        <name>Mg(2+)</name>
        <dbReference type="ChEBI" id="CHEBI:18420"/>
    </ligand>
</feature>
<feature type="binding site" evidence="1">
    <location>
        <position position="119"/>
    </location>
    <ligand>
        <name>Mg(2+)</name>
        <dbReference type="ChEBI" id="CHEBI:18420"/>
    </ligand>
</feature>
<name>RNC_CHRVO</name>
<sequence>MTQIDNRFRRLSQALDYAFQKPELLRQALTHRSYSSANNERFEFVGDSILNYTVARMLYDQFPQLTEGELSRLRANLVNQNTLAEIAHELKLGDYLYLGEGELKSGGFNRPSILADALEATFAAVSFDADFAAAEQVVRRLYNQRVATIDTTRQAKDAKTRLQEALQARKLALPKYRILSQSGEAHEQWFKVECDLGEMALISTGDGGSRRAAEQQAAEAALTLLEQKLAASKKRS</sequence>
<comment type="function">
    <text evidence="1">Digests double-stranded RNA. Involved in the processing of primary rRNA transcript to yield the immediate precursors to the large and small rRNAs (23S and 16S). Processes some mRNAs, and tRNAs when they are encoded in the rRNA operon. Processes pre-crRNA and tracrRNA of type II CRISPR loci if present in the organism.</text>
</comment>
<comment type="catalytic activity">
    <reaction evidence="1">
        <text>Endonucleolytic cleavage to 5'-phosphomonoester.</text>
        <dbReference type="EC" id="3.1.26.3"/>
    </reaction>
</comment>
<comment type="cofactor">
    <cofactor evidence="1">
        <name>Mg(2+)</name>
        <dbReference type="ChEBI" id="CHEBI:18420"/>
    </cofactor>
</comment>
<comment type="subunit">
    <text evidence="1">Homodimer.</text>
</comment>
<comment type="subcellular location">
    <subcellularLocation>
        <location evidence="1">Cytoplasm</location>
    </subcellularLocation>
</comment>
<comment type="similarity">
    <text evidence="1">Belongs to the ribonuclease III family.</text>
</comment>
<gene>
    <name evidence="1" type="primary">rnc</name>
    <name type="ordered locus">CV_2066</name>
</gene>
<dbReference type="EC" id="3.1.26.3" evidence="1"/>
<dbReference type="EMBL" id="AE016825">
    <property type="protein sequence ID" value="AAQ59738.1"/>
    <property type="molecule type" value="Genomic_DNA"/>
</dbReference>
<dbReference type="RefSeq" id="WP_011135614.1">
    <property type="nucleotide sequence ID" value="NC_005085.1"/>
</dbReference>
<dbReference type="SMR" id="Q7NWC4"/>
<dbReference type="STRING" id="243365.CV_2066"/>
<dbReference type="GeneID" id="66367730"/>
<dbReference type="KEGG" id="cvi:CV_2066"/>
<dbReference type="eggNOG" id="COG0571">
    <property type="taxonomic scope" value="Bacteria"/>
</dbReference>
<dbReference type="HOGENOM" id="CLU_000907_1_1_4"/>
<dbReference type="Proteomes" id="UP000001424">
    <property type="component" value="Chromosome"/>
</dbReference>
<dbReference type="GO" id="GO:0005737">
    <property type="term" value="C:cytoplasm"/>
    <property type="evidence" value="ECO:0007669"/>
    <property type="project" value="UniProtKB-SubCell"/>
</dbReference>
<dbReference type="GO" id="GO:0003725">
    <property type="term" value="F:double-stranded RNA binding"/>
    <property type="evidence" value="ECO:0007669"/>
    <property type="project" value="TreeGrafter"/>
</dbReference>
<dbReference type="GO" id="GO:0046872">
    <property type="term" value="F:metal ion binding"/>
    <property type="evidence" value="ECO:0007669"/>
    <property type="project" value="UniProtKB-KW"/>
</dbReference>
<dbReference type="GO" id="GO:0004525">
    <property type="term" value="F:ribonuclease III activity"/>
    <property type="evidence" value="ECO:0007669"/>
    <property type="project" value="UniProtKB-UniRule"/>
</dbReference>
<dbReference type="GO" id="GO:0019843">
    <property type="term" value="F:rRNA binding"/>
    <property type="evidence" value="ECO:0007669"/>
    <property type="project" value="UniProtKB-KW"/>
</dbReference>
<dbReference type="GO" id="GO:0006397">
    <property type="term" value="P:mRNA processing"/>
    <property type="evidence" value="ECO:0007669"/>
    <property type="project" value="UniProtKB-UniRule"/>
</dbReference>
<dbReference type="GO" id="GO:0010468">
    <property type="term" value="P:regulation of gene expression"/>
    <property type="evidence" value="ECO:0007669"/>
    <property type="project" value="TreeGrafter"/>
</dbReference>
<dbReference type="GO" id="GO:0006364">
    <property type="term" value="P:rRNA processing"/>
    <property type="evidence" value="ECO:0007669"/>
    <property type="project" value="UniProtKB-UniRule"/>
</dbReference>
<dbReference type="GO" id="GO:0008033">
    <property type="term" value="P:tRNA processing"/>
    <property type="evidence" value="ECO:0007669"/>
    <property type="project" value="UniProtKB-KW"/>
</dbReference>
<dbReference type="CDD" id="cd10845">
    <property type="entry name" value="DSRM_RNAse_III_family"/>
    <property type="match status" value="1"/>
</dbReference>
<dbReference type="CDD" id="cd00593">
    <property type="entry name" value="RIBOc"/>
    <property type="match status" value="1"/>
</dbReference>
<dbReference type="FunFam" id="1.10.1520.10:FF:000001">
    <property type="entry name" value="Ribonuclease 3"/>
    <property type="match status" value="1"/>
</dbReference>
<dbReference type="FunFam" id="3.30.160.20:FF:000003">
    <property type="entry name" value="Ribonuclease 3"/>
    <property type="match status" value="1"/>
</dbReference>
<dbReference type="Gene3D" id="3.30.160.20">
    <property type="match status" value="1"/>
</dbReference>
<dbReference type="Gene3D" id="1.10.1520.10">
    <property type="entry name" value="Ribonuclease III domain"/>
    <property type="match status" value="1"/>
</dbReference>
<dbReference type="HAMAP" id="MF_00104">
    <property type="entry name" value="RNase_III"/>
    <property type="match status" value="1"/>
</dbReference>
<dbReference type="InterPro" id="IPR014720">
    <property type="entry name" value="dsRBD_dom"/>
</dbReference>
<dbReference type="InterPro" id="IPR011907">
    <property type="entry name" value="RNase_III"/>
</dbReference>
<dbReference type="InterPro" id="IPR000999">
    <property type="entry name" value="RNase_III_dom"/>
</dbReference>
<dbReference type="InterPro" id="IPR036389">
    <property type="entry name" value="RNase_III_sf"/>
</dbReference>
<dbReference type="NCBIfam" id="TIGR02191">
    <property type="entry name" value="RNaseIII"/>
    <property type="match status" value="1"/>
</dbReference>
<dbReference type="PANTHER" id="PTHR11207:SF0">
    <property type="entry name" value="RIBONUCLEASE 3"/>
    <property type="match status" value="1"/>
</dbReference>
<dbReference type="PANTHER" id="PTHR11207">
    <property type="entry name" value="RIBONUCLEASE III"/>
    <property type="match status" value="1"/>
</dbReference>
<dbReference type="Pfam" id="PF00035">
    <property type="entry name" value="dsrm"/>
    <property type="match status" value="1"/>
</dbReference>
<dbReference type="Pfam" id="PF14622">
    <property type="entry name" value="Ribonucleas_3_3"/>
    <property type="match status" value="1"/>
</dbReference>
<dbReference type="SMART" id="SM00358">
    <property type="entry name" value="DSRM"/>
    <property type="match status" value="1"/>
</dbReference>
<dbReference type="SMART" id="SM00535">
    <property type="entry name" value="RIBOc"/>
    <property type="match status" value="1"/>
</dbReference>
<dbReference type="SUPFAM" id="SSF54768">
    <property type="entry name" value="dsRNA-binding domain-like"/>
    <property type="match status" value="1"/>
</dbReference>
<dbReference type="SUPFAM" id="SSF69065">
    <property type="entry name" value="RNase III domain-like"/>
    <property type="match status" value="1"/>
</dbReference>
<dbReference type="PROSITE" id="PS50137">
    <property type="entry name" value="DS_RBD"/>
    <property type="match status" value="1"/>
</dbReference>
<dbReference type="PROSITE" id="PS00517">
    <property type="entry name" value="RNASE_3_1"/>
    <property type="match status" value="1"/>
</dbReference>
<dbReference type="PROSITE" id="PS50142">
    <property type="entry name" value="RNASE_3_2"/>
    <property type="match status" value="1"/>
</dbReference>
<protein>
    <recommendedName>
        <fullName evidence="1">Ribonuclease 3</fullName>
        <ecNumber evidence="1">3.1.26.3</ecNumber>
    </recommendedName>
    <alternativeName>
        <fullName evidence="1">Ribonuclease III</fullName>
        <shortName evidence="1">RNase III</shortName>
    </alternativeName>
</protein>
<reference key="1">
    <citation type="journal article" date="2003" name="Proc. Natl. Acad. Sci. U.S.A.">
        <title>The complete genome sequence of Chromobacterium violaceum reveals remarkable and exploitable bacterial adaptability.</title>
        <authorList>
            <person name="Vasconcelos A.T.R."/>
            <person name="de Almeida D.F."/>
            <person name="Hungria M."/>
            <person name="Guimaraes C.T."/>
            <person name="Antonio R.V."/>
            <person name="Almeida F.C."/>
            <person name="de Almeida L.G.P."/>
            <person name="de Almeida R."/>
            <person name="Alves-Gomes J.A."/>
            <person name="Andrade E.M."/>
            <person name="Araripe J."/>
            <person name="de Araujo M.F.F."/>
            <person name="Astolfi-Filho S."/>
            <person name="Azevedo V."/>
            <person name="Baptista A.J."/>
            <person name="Bataus L.A.M."/>
            <person name="Batista J.S."/>
            <person name="Belo A."/>
            <person name="van den Berg C."/>
            <person name="Bogo M."/>
            <person name="Bonatto S."/>
            <person name="Bordignon J."/>
            <person name="Brigido M.M."/>
            <person name="Brito C.A."/>
            <person name="Brocchi M."/>
            <person name="Burity H.A."/>
            <person name="Camargo A.A."/>
            <person name="Cardoso D.D.P."/>
            <person name="Carneiro N.P."/>
            <person name="Carraro D.M."/>
            <person name="Carvalho C.M.B."/>
            <person name="Cascardo J.C.M."/>
            <person name="Cavada B.S."/>
            <person name="Chueire L.M.O."/>
            <person name="Creczynski-Pasa T.B."/>
            <person name="Cunha-Junior N.C."/>
            <person name="Fagundes N."/>
            <person name="Falcao C.L."/>
            <person name="Fantinatti F."/>
            <person name="Farias I.P."/>
            <person name="Felipe M.S.S."/>
            <person name="Ferrari L.P."/>
            <person name="Ferro J.A."/>
            <person name="Ferro M.I.T."/>
            <person name="Franco G.R."/>
            <person name="Freitas N.S.A."/>
            <person name="Furlan L.R."/>
            <person name="Gazzinelli R.T."/>
            <person name="Gomes E.A."/>
            <person name="Goncalves P.R."/>
            <person name="Grangeiro T.B."/>
            <person name="Grattapaglia D."/>
            <person name="Grisard E.C."/>
            <person name="Hanna E.S."/>
            <person name="Jardim S.N."/>
            <person name="Laurino J."/>
            <person name="Leoi L.C.T."/>
            <person name="Lima L.F.A."/>
            <person name="Loureiro M.F."/>
            <person name="Lyra M.C.C.P."/>
            <person name="Madeira H.M.F."/>
            <person name="Manfio G.P."/>
            <person name="Maranhao A.Q."/>
            <person name="Martins W.S."/>
            <person name="di Mauro S.M.Z."/>
            <person name="de Medeiros S.R.B."/>
            <person name="Meissner R.V."/>
            <person name="Moreira M.A.M."/>
            <person name="Nascimento F.F."/>
            <person name="Nicolas M.F."/>
            <person name="Oliveira J.G."/>
            <person name="Oliveira S.C."/>
            <person name="Paixao R.F.C."/>
            <person name="Parente J.A."/>
            <person name="Pedrosa F.O."/>
            <person name="Pena S.D.J."/>
            <person name="Pereira J.O."/>
            <person name="Pereira M."/>
            <person name="Pinto L.S.R.C."/>
            <person name="Pinto L.S."/>
            <person name="Porto J.I.R."/>
            <person name="Potrich D.P."/>
            <person name="Ramalho-Neto C.E."/>
            <person name="Reis A.M.M."/>
            <person name="Rigo L.U."/>
            <person name="Rondinelli E."/>
            <person name="Santos E.B.P."/>
            <person name="Santos F.R."/>
            <person name="Schneider M.P.C."/>
            <person name="Seuanez H.N."/>
            <person name="Silva A.M.R."/>
            <person name="da Silva A.L.C."/>
            <person name="Silva D.W."/>
            <person name="Silva R."/>
            <person name="Simoes I.C."/>
            <person name="Simon D."/>
            <person name="Soares C.M.A."/>
            <person name="Soares R.B.A."/>
            <person name="Souza E.M."/>
            <person name="Souza K.R.L."/>
            <person name="Souza R.C."/>
            <person name="Steffens M.B.R."/>
            <person name="Steindel M."/>
            <person name="Teixeira S.R."/>
            <person name="Urmenyi T."/>
            <person name="Vettore A."/>
            <person name="Wassem R."/>
            <person name="Zaha A."/>
            <person name="Simpson A.J.G."/>
        </authorList>
    </citation>
    <scope>NUCLEOTIDE SEQUENCE [LARGE SCALE GENOMIC DNA]</scope>
    <source>
        <strain>ATCC 12472 / DSM 30191 / JCM 1249 / CCUG 213 / NBRC 12614 / NCIMB 9131 / NCTC 9757 / MK</strain>
    </source>
</reference>